<accession>A9MY90</accession>
<gene>
    <name evidence="1" type="primary">metE</name>
    <name type="ordered locus">SPAB_04918</name>
</gene>
<keyword id="KW-0028">Amino-acid biosynthesis</keyword>
<keyword id="KW-0479">Metal-binding</keyword>
<keyword id="KW-0486">Methionine biosynthesis</keyword>
<keyword id="KW-0489">Methyltransferase</keyword>
<keyword id="KW-0677">Repeat</keyword>
<keyword id="KW-0808">Transferase</keyword>
<keyword id="KW-0862">Zinc</keyword>
<feature type="chain" id="PRO_1000077117" description="5-methyltetrahydropteroyltriglutamate--homocysteine methyltransferase">
    <location>
        <begin position="1"/>
        <end position="754"/>
    </location>
</feature>
<feature type="active site" description="Proton donor" evidence="1">
    <location>
        <position position="694"/>
    </location>
</feature>
<feature type="binding site" evidence="1">
    <location>
        <begin position="17"/>
        <end position="20"/>
    </location>
    <ligand>
        <name>5-methyltetrahydropteroyltri-L-glutamate</name>
        <dbReference type="ChEBI" id="CHEBI:58207"/>
    </ligand>
</feature>
<feature type="binding site" evidence="1">
    <location>
        <position position="117"/>
    </location>
    <ligand>
        <name>5-methyltetrahydropteroyltri-L-glutamate</name>
        <dbReference type="ChEBI" id="CHEBI:58207"/>
    </ligand>
</feature>
<feature type="binding site" evidence="1">
    <location>
        <begin position="431"/>
        <end position="433"/>
    </location>
    <ligand>
        <name>L-homocysteine</name>
        <dbReference type="ChEBI" id="CHEBI:58199"/>
    </ligand>
</feature>
<feature type="binding site" evidence="1">
    <location>
        <begin position="431"/>
        <end position="433"/>
    </location>
    <ligand>
        <name>L-methionine</name>
        <dbReference type="ChEBI" id="CHEBI:57844"/>
    </ligand>
</feature>
<feature type="binding site" evidence="1">
    <location>
        <position position="484"/>
    </location>
    <ligand>
        <name>L-homocysteine</name>
        <dbReference type="ChEBI" id="CHEBI:58199"/>
    </ligand>
</feature>
<feature type="binding site" evidence="1">
    <location>
        <position position="484"/>
    </location>
    <ligand>
        <name>L-methionine</name>
        <dbReference type="ChEBI" id="CHEBI:57844"/>
    </ligand>
</feature>
<feature type="binding site" evidence="1">
    <location>
        <begin position="515"/>
        <end position="516"/>
    </location>
    <ligand>
        <name>5-methyltetrahydropteroyltri-L-glutamate</name>
        <dbReference type="ChEBI" id="CHEBI:58207"/>
    </ligand>
</feature>
<feature type="binding site" evidence="1">
    <location>
        <position position="561"/>
    </location>
    <ligand>
        <name>5-methyltetrahydropteroyltri-L-glutamate</name>
        <dbReference type="ChEBI" id="CHEBI:58207"/>
    </ligand>
</feature>
<feature type="binding site" evidence="1">
    <location>
        <position position="599"/>
    </location>
    <ligand>
        <name>L-homocysteine</name>
        <dbReference type="ChEBI" id="CHEBI:58199"/>
    </ligand>
</feature>
<feature type="binding site" evidence="1">
    <location>
        <position position="599"/>
    </location>
    <ligand>
        <name>L-methionine</name>
        <dbReference type="ChEBI" id="CHEBI:57844"/>
    </ligand>
</feature>
<feature type="binding site" evidence="1">
    <location>
        <position position="605"/>
    </location>
    <ligand>
        <name>5-methyltetrahydropteroyltri-L-glutamate</name>
        <dbReference type="ChEBI" id="CHEBI:58207"/>
    </ligand>
</feature>
<feature type="binding site" evidence="1">
    <location>
        <position position="641"/>
    </location>
    <ligand>
        <name>Zn(2+)</name>
        <dbReference type="ChEBI" id="CHEBI:29105"/>
        <note>catalytic</note>
    </ligand>
</feature>
<feature type="binding site" evidence="1">
    <location>
        <position position="643"/>
    </location>
    <ligand>
        <name>Zn(2+)</name>
        <dbReference type="ChEBI" id="CHEBI:29105"/>
        <note>catalytic</note>
    </ligand>
</feature>
<feature type="binding site" evidence="1">
    <location>
        <position position="665"/>
    </location>
    <ligand>
        <name>Zn(2+)</name>
        <dbReference type="ChEBI" id="CHEBI:29105"/>
        <note>catalytic</note>
    </ligand>
</feature>
<feature type="binding site" evidence="1">
    <location>
        <position position="726"/>
    </location>
    <ligand>
        <name>Zn(2+)</name>
        <dbReference type="ChEBI" id="CHEBI:29105"/>
        <note>catalytic</note>
    </ligand>
</feature>
<comment type="function">
    <text evidence="1">Catalyzes the transfer of a methyl group from 5-methyltetrahydrofolate to homocysteine resulting in methionine formation.</text>
</comment>
<comment type="catalytic activity">
    <reaction evidence="1">
        <text>5-methyltetrahydropteroyltri-L-glutamate + L-homocysteine = tetrahydropteroyltri-L-glutamate + L-methionine</text>
        <dbReference type="Rhea" id="RHEA:21196"/>
        <dbReference type="ChEBI" id="CHEBI:57844"/>
        <dbReference type="ChEBI" id="CHEBI:58140"/>
        <dbReference type="ChEBI" id="CHEBI:58199"/>
        <dbReference type="ChEBI" id="CHEBI:58207"/>
        <dbReference type="EC" id="2.1.1.14"/>
    </reaction>
</comment>
<comment type="cofactor">
    <cofactor evidence="1">
        <name>Zn(2+)</name>
        <dbReference type="ChEBI" id="CHEBI:29105"/>
    </cofactor>
    <text evidence="1">Binds 1 zinc ion per subunit.</text>
</comment>
<comment type="pathway">
    <text evidence="1">Amino-acid biosynthesis; L-methionine biosynthesis via de novo pathway; L-methionine from L-homocysteine (MetE route): step 1/1.</text>
</comment>
<comment type="similarity">
    <text evidence="1">Belongs to the vitamin-B12 independent methionine synthase family.</text>
</comment>
<reference key="1">
    <citation type="submission" date="2007-11" db="EMBL/GenBank/DDBJ databases">
        <authorList>
            <consortium name="The Salmonella enterica serovar Paratyphi B Genome Sequencing Project"/>
            <person name="McClelland M."/>
            <person name="Sanderson E.K."/>
            <person name="Porwollik S."/>
            <person name="Spieth J."/>
            <person name="Clifton W.S."/>
            <person name="Fulton R."/>
            <person name="Cordes M."/>
            <person name="Wollam A."/>
            <person name="Shah N."/>
            <person name="Pepin K."/>
            <person name="Bhonagiri V."/>
            <person name="Nash W."/>
            <person name="Johnson M."/>
            <person name="Thiruvilangam P."/>
            <person name="Wilson R."/>
        </authorList>
    </citation>
    <scope>NUCLEOTIDE SEQUENCE [LARGE SCALE GENOMIC DNA]</scope>
    <source>
        <strain>ATCC BAA-1250 / SPB7</strain>
    </source>
</reference>
<sequence>MTILTHTLGFPRVGLRRELKKAQESYWAGNSTREALLAVGRELRARHWEQQKQAGIDLLPVGDFAWYDHVLTTSLLLGNVPARHQNNDGSVDIDTLFRIGRGRAPTGEPAAAAEMTKWFNTNYHYIVPEFSKGQQFRLTWTQLLEEVDEALALGHKIKPVLLGPVTYLWLGKVKGEPFDRLTLLKDILPVYQHVLAELAKRGIEWVQIDEPALVLELPQAWLDAFKPAYDALAGQVKLLLTTYFEGVTPNLDTIIALPVQGLHVDLIHGKDDVAELHQRLPVDWLLSAGLINGRNVWRADLTEKYAQINAIVGKRALWVASSCSLLHSPIDLSVETRLDTEVKSWFAFALQKCGELALLRDALNSGETAALEEWSAPIQARRHSRRVHNAAVEKRLAAITAQDSQRENPYEVRAEAQRARFKLPAWPTTTIGSFPQTTEIRGLRLDFKKGNLDANNYRTGIAEHIKQAIIEQERLGLDVLVHGEAERNDMVEYFGEHLDGFVFTQNGWVQSYGSRCVKPPVVIGDISRPAPITVEWAKYAQSLTDKPVKGMLTGPVTILCWSFPREDVTRETIAKQIALALRDEVADLEAAGIGIIQIDEPALREGLPLRRSDWDAYLEWGVEAFRINAAVAKDETQIHTHMCYCEFNDIMDSIAALDADVITIETSRSDMELLESFEAFDYPNEIGPGVYDIHSPNVPSVEWIEALLKKAAQRIPAQRLWVNPDCGLKTRGWPETRAALANMVKAAHNLRQAK</sequence>
<protein>
    <recommendedName>
        <fullName evidence="1">5-methyltetrahydropteroyltriglutamate--homocysteine methyltransferase</fullName>
        <ecNumber evidence="1">2.1.1.14</ecNumber>
    </recommendedName>
    <alternativeName>
        <fullName evidence="1">Cobalamin-independent methionine synthase</fullName>
    </alternativeName>
    <alternativeName>
        <fullName evidence="1">Methionine synthase, vitamin-B12 independent isozyme</fullName>
    </alternativeName>
</protein>
<dbReference type="EC" id="2.1.1.14" evidence="1"/>
<dbReference type="EMBL" id="CP000886">
    <property type="protein sequence ID" value="ABX70217.1"/>
    <property type="molecule type" value="Genomic_DNA"/>
</dbReference>
<dbReference type="RefSeq" id="WP_000154179.1">
    <property type="nucleotide sequence ID" value="NC_010102.1"/>
</dbReference>
<dbReference type="SMR" id="A9MY90"/>
<dbReference type="KEGG" id="spq:SPAB_04918"/>
<dbReference type="PATRIC" id="fig|1016998.12.peg.4619"/>
<dbReference type="HOGENOM" id="CLU_013175_0_0_6"/>
<dbReference type="BioCyc" id="SENT1016998:SPAB_RS20005-MONOMER"/>
<dbReference type="UniPathway" id="UPA00051">
    <property type="reaction ID" value="UER00082"/>
</dbReference>
<dbReference type="Proteomes" id="UP000008556">
    <property type="component" value="Chromosome"/>
</dbReference>
<dbReference type="GO" id="GO:0003871">
    <property type="term" value="F:5-methyltetrahydropteroyltriglutamate-homocysteine S-methyltransferase activity"/>
    <property type="evidence" value="ECO:0007669"/>
    <property type="project" value="UniProtKB-UniRule"/>
</dbReference>
<dbReference type="GO" id="GO:0008270">
    <property type="term" value="F:zinc ion binding"/>
    <property type="evidence" value="ECO:0007669"/>
    <property type="project" value="InterPro"/>
</dbReference>
<dbReference type="GO" id="GO:0009086">
    <property type="term" value="P:methionine biosynthetic process"/>
    <property type="evidence" value="ECO:0007669"/>
    <property type="project" value="UniProtKB-UniRule"/>
</dbReference>
<dbReference type="GO" id="GO:0032259">
    <property type="term" value="P:methylation"/>
    <property type="evidence" value="ECO:0007669"/>
    <property type="project" value="UniProtKB-KW"/>
</dbReference>
<dbReference type="CDD" id="cd03311">
    <property type="entry name" value="CIMS_C_terminal_like"/>
    <property type="match status" value="1"/>
</dbReference>
<dbReference type="CDD" id="cd03312">
    <property type="entry name" value="CIMS_N_terminal_like"/>
    <property type="match status" value="1"/>
</dbReference>
<dbReference type="FunFam" id="3.20.20.210:FF:000002">
    <property type="entry name" value="5-methyltetrahydropteroyltriglutamate--homocysteine methyltransferase"/>
    <property type="match status" value="1"/>
</dbReference>
<dbReference type="FunFam" id="3.20.20.210:FF:000003">
    <property type="entry name" value="5-methyltetrahydropteroyltriglutamate--homocysteine methyltransferase"/>
    <property type="match status" value="1"/>
</dbReference>
<dbReference type="Gene3D" id="3.20.20.210">
    <property type="match status" value="2"/>
</dbReference>
<dbReference type="HAMAP" id="MF_00172">
    <property type="entry name" value="Meth_synth"/>
    <property type="match status" value="1"/>
</dbReference>
<dbReference type="InterPro" id="IPR013215">
    <property type="entry name" value="Cbl-indep_Met_Synth_N"/>
</dbReference>
<dbReference type="InterPro" id="IPR006276">
    <property type="entry name" value="Cobalamin-indep_Met_synthase"/>
</dbReference>
<dbReference type="InterPro" id="IPR002629">
    <property type="entry name" value="Met_Synth_C/arc"/>
</dbReference>
<dbReference type="InterPro" id="IPR038071">
    <property type="entry name" value="UROD/MetE-like_sf"/>
</dbReference>
<dbReference type="NCBIfam" id="TIGR01371">
    <property type="entry name" value="met_syn_B12ind"/>
    <property type="match status" value="1"/>
</dbReference>
<dbReference type="NCBIfam" id="NF003556">
    <property type="entry name" value="PRK05222.1"/>
    <property type="match status" value="1"/>
</dbReference>
<dbReference type="PANTHER" id="PTHR30519">
    <property type="entry name" value="5-METHYLTETRAHYDROPTEROYLTRIGLUTAMATE--HOMOCYSTEINE METHYLTRANSFERASE"/>
    <property type="match status" value="1"/>
</dbReference>
<dbReference type="Pfam" id="PF08267">
    <property type="entry name" value="Meth_synt_1"/>
    <property type="match status" value="1"/>
</dbReference>
<dbReference type="Pfam" id="PF01717">
    <property type="entry name" value="Meth_synt_2"/>
    <property type="match status" value="1"/>
</dbReference>
<dbReference type="PIRSF" id="PIRSF000382">
    <property type="entry name" value="MeTrfase_B12_ind"/>
    <property type="match status" value="1"/>
</dbReference>
<dbReference type="SUPFAM" id="SSF51726">
    <property type="entry name" value="UROD/MetE-like"/>
    <property type="match status" value="2"/>
</dbReference>
<proteinExistence type="inferred from homology"/>
<evidence type="ECO:0000255" key="1">
    <source>
        <dbReference type="HAMAP-Rule" id="MF_00172"/>
    </source>
</evidence>
<name>METE_SALPB</name>
<organism>
    <name type="scientific">Salmonella paratyphi B (strain ATCC BAA-1250 / SPB7)</name>
    <dbReference type="NCBI Taxonomy" id="1016998"/>
    <lineage>
        <taxon>Bacteria</taxon>
        <taxon>Pseudomonadati</taxon>
        <taxon>Pseudomonadota</taxon>
        <taxon>Gammaproteobacteria</taxon>
        <taxon>Enterobacterales</taxon>
        <taxon>Enterobacteriaceae</taxon>
        <taxon>Salmonella</taxon>
    </lineage>
</organism>